<accession>P05378</accession>
<accession>Q5SH86</accession>
<name>TRPE_THET8</name>
<organism>
    <name type="scientific">Thermus thermophilus (strain ATCC 27634 / DSM 579 / HB8)</name>
    <dbReference type="NCBI Taxonomy" id="300852"/>
    <lineage>
        <taxon>Bacteria</taxon>
        <taxon>Thermotogati</taxon>
        <taxon>Deinococcota</taxon>
        <taxon>Deinococci</taxon>
        <taxon>Thermales</taxon>
        <taxon>Thermaceae</taxon>
        <taxon>Thermus</taxon>
    </lineage>
</organism>
<keyword id="KW-0028">Amino-acid biosynthesis</keyword>
<keyword id="KW-0057">Aromatic amino acid biosynthesis</keyword>
<keyword id="KW-0456">Lyase</keyword>
<keyword id="KW-0460">Magnesium</keyword>
<keyword id="KW-0479">Metal-binding</keyword>
<keyword id="KW-1185">Reference proteome</keyword>
<keyword id="KW-0822">Tryptophan biosynthesis</keyword>
<comment type="function">
    <text evidence="1">Part of a heterotetrameric complex that catalyzes the two-step biosynthesis of anthranilate, an intermediate in the biosynthesis of L-tryptophan. In the first step, the glutamine-binding beta subunit (TrpG) of anthranilate synthase (AS) provides the glutamine amidotransferase activity which generates ammonia as a substrate that, along with chorismate, is used in the second step, catalyzed by the large alpha subunit of AS (TrpE) to produce anthranilate. In the absence of TrpG, TrpE can synthesize anthranilate directly from chorismate and high concentrations of ammonia (By similarity).</text>
</comment>
<comment type="catalytic activity">
    <reaction>
        <text>chorismate + L-glutamine = anthranilate + pyruvate + L-glutamate + H(+)</text>
        <dbReference type="Rhea" id="RHEA:21732"/>
        <dbReference type="ChEBI" id="CHEBI:15361"/>
        <dbReference type="ChEBI" id="CHEBI:15378"/>
        <dbReference type="ChEBI" id="CHEBI:16567"/>
        <dbReference type="ChEBI" id="CHEBI:29748"/>
        <dbReference type="ChEBI" id="CHEBI:29985"/>
        <dbReference type="ChEBI" id="CHEBI:58359"/>
        <dbReference type="EC" id="4.1.3.27"/>
    </reaction>
</comment>
<comment type="cofactor">
    <cofactor evidence="2">
        <name>Mg(2+)</name>
        <dbReference type="ChEBI" id="CHEBI:18420"/>
    </cofactor>
    <text evidence="2">Binds 1 Mg(2+) ion per subunit.</text>
</comment>
<comment type="activity regulation">
    <text evidence="1">Feedback inhibited by tryptophan.</text>
</comment>
<comment type="pathway">
    <text>Amino-acid biosynthesis; L-tryptophan biosynthesis; L-tryptophan from chorismate: step 1/5.</text>
</comment>
<comment type="subunit">
    <text evidence="1">Heterotetramer consisting of two non-identical subunits: a beta subunit (TrpG) and a large alpha subunit (TrpE).</text>
</comment>
<comment type="similarity">
    <text evidence="3">Belongs to the anthranilate synthase component I family.</text>
</comment>
<evidence type="ECO:0000250" key="1"/>
<evidence type="ECO:0000250" key="2">
    <source>
        <dbReference type="UniProtKB" id="P00897"/>
    </source>
</evidence>
<evidence type="ECO:0000305" key="3"/>
<sequence>MERIRPYRKTFLADLETPVTAYLKLAEKAPVSFLLESVERGRQSRFSIVGVGARRTFRLKDGVFTVNGERVETRDPLRALYERVYAPLERHPDLPPFFGGVVGYAAYDLVRYYERLPSLKPDDLGLPDLLFVEPEVVAVFDHLKNLLHLVAPGRDPEEAEARLFWAERRLKGPLPGVPGERAGGRARFQADFSREAYLEAVRRALDYIRAGDIFQVVLSLRLSSPLTVHPFALYRALRSVNPSPYMGYLDLGEVVLVSASPESLLRSDGRRVVTRPIAGTRPRGKDEEEDKRLAEELLRDEKEVAEHVMLLDLSRNDIGRVAAFGTVRVLEPLHVEHYSHVMHLVSTVEGILAEGKTPLDALASVLPMGTVSGAPKIRAMEIIEELEPHRRGPYGGSFGYLAYDGAMDMALTLRTFVVAKGWMHVQAGAGIVADSVPEREYEECWNKARALLKAVEMAEAGL</sequence>
<protein>
    <recommendedName>
        <fullName>Anthranilate synthase component 1</fullName>
        <shortName>AS</shortName>
        <shortName>ASI</shortName>
        <ecNumber>4.1.3.27</ecNumber>
    </recommendedName>
</protein>
<dbReference type="EC" id="4.1.3.27"/>
<dbReference type="EMBL" id="X07744">
    <property type="protein sequence ID" value="CAA30566.1"/>
    <property type="molecule type" value="Genomic_DNA"/>
</dbReference>
<dbReference type="EMBL" id="AP008226">
    <property type="protein sequence ID" value="BAD71667.1"/>
    <property type="molecule type" value="Genomic_DNA"/>
</dbReference>
<dbReference type="RefSeq" id="WP_011173868.1">
    <property type="nucleotide sequence ID" value="NC_006461.1"/>
</dbReference>
<dbReference type="RefSeq" id="YP_145110.1">
    <property type="nucleotide sequence ID" value="NC_006461.1"/>
</dbReference>
<dbReference type="SMR" id="P05378"/>
<dbReference type="EnsemblBacteria" id="BAD71667">
    <property type="protein sequence ID" value="BAD71667"/>
    <property type="gene ID" value="BAD71667"/>
</dbReference>
<dbReference type="GeneID" id="3168049"/>
<dbReference type="KEGG" id="ttj:TTHA1844"/>
<dbReference type="PATRIC" id="fig|300852.9.peg.1815"/>
<dbReference type="eggNOG" id="COG0147">
    <property type="taxonomic scope" value="Bacteria"/>
</dbReference>
<dbReference type="HOGENOM" id="CLU_006493_9_3_0"/>
<dbReference type="PhylomeDB" id="P05378"/>
<dbReference type="UniPathway" id="UPA00035">
    <property type="reaction ID" value="UER00040"/>
</dbReference>
<dbReference type="Proteomes" id="UP000000532">
    <property type="component" value="Chromosome"/>
</dbReference>
<dbReference type="GO" id="GO:0004049">
    <property type="term" value="F:anthranilate synthase activity"/>
    <property type="evidence" value="ECO:0007669"/>
    <property type="project" value="UniProtKB-EC"/>
</dbReference>
<dbReference type="GO" id="GO:0046872">
    <property type="term" value="F:metal ion binding"/>
    <property type="evidence" value="ECO:0007669"/>
    <property type="project" value="UniProtKB-KW"/>
</dbReference>
<dbReference type="GO" id="GO:0000162">
    <property type="term" value="P:L-tryptophan biosynthetic process"/>
    <property type="evidence" value="ECO:0007669"/>
    <property type="project" value="UniProtKB-UniPathway"/>
</dbReference>
<dbReference type="Gene3D" id="3.60.120.10">
    <property type="entry name" value="Anthranilate synthase"/>
    <property type="match status" value="1"/>
</dbReference>
<dbReference type="InterPro" id="IPR005801">
    <property type="entry name" value="ADC_synthase"/>
</dbReference>
<dbReference type="InterPro" id="IPR019999">
    <property type="entry name" value="Anth_synth_I-like"/>
</dbReference>
<dbReference type="InterPro" id="IPR006805">
    <property type="entry name" value="Anth_synth_I_N"/>
</dbReference>
<dbReference type="InterPro" id="IPR005256">
    <property type="entry name" value="Anth_synth_I_PabB"/>
</dbReference>
<dbReference type="InterPro" id="IPR015890">
    <property type="entry name" value="Chorismate_C"/>
</dbReference>
<dbReference type="NCBIfam" id="TIGR00564">
    <property type="entry name" value="trpE_most"/>
    <property type="match status" value="1"/>
</dbReference>
<dbReference type="PANTHER" id="PTHR11236">
    <property type="entry name" value="AMINOBENZOATE/ANTHRANILATE SYNTHASE"/>
    <property type="match status" value="1"/>
</dbReference>
<dbReference type="PANTHER" id="PTHR11236:SF48">
    <property type="entry name" value="ISOCHORISMATE SYNTHASE MENF"/>
    <property type="match status" value="1"/>
</dbReference>
<dbReference type="Pfam" id="PF04715">
    <property type="entry name" value="Anth_synt_I_N"/>
    <property type="match status" value="1"/>
</dbReference>
<dbReference type="Pfam" id="PF00425">
    <property type="entry name" value="Chorismate_bind"/>
    <property type="match status" value="1"/>
</dbReference>
<dbReference type="PRINTS" id="PR00095">
    <property type="entry name" value="ANTSNTHASEI"/>
</dbReference>
<dbReference type="SUPFAM" id="SSF56322">
    <property type="entry name" value="ADC synthase"/>
    <property type="match status" value="1"/>
</dbReference>
<feature type="chain" id="PRO_0000154117" description="Anthranilate synthase component 1">
    <location>
        <begin position="1"/>
        <end position="462"/>
    </location>
</feature>
<feature type="binding site" evidence="2">
    <location>
        <position position="37"/>
    </location>
    <ligand>
        <name>L-tryptophan</name>
        <dbReference type="ChEBI" id="CHEBI:57912"/>
    </ligand>
</feature>
<feature type="binding site" evidence="2">
    <location>
        <begin position="244"/>
        <end position="246"/>
    </location>
    <ligand>
        <name>L-tryptophan</name>
        <dbReference type="ChEBI" id="CHEBI:57912"/>
    </ligand>
</feature>
<feature type="binding site" evidence="2">
    <location>
        <begin position="279"/>
        <end position="280"/>
    </location>
    <ligand>
        <name>chorismate</name>
        <dbReference type="ChEBI" id="CHEBI:29748"/>
    </ligand>
</feature>
<feature type="binding site" evidence="2">
    <location>
        <position position="306"/>
    </location>
    <ligand>
        <name>Mg(2+)</name>
        <dbReference type="ChEBI" id="CHEBI:18420"/>
    </ligand>
</feature>
<feature type="binding site" evidence="2">
    <location>
        <position position="394"/>
    </location>
    <ligand>
        <name>chorismate</name>
        <dbReference type="ChEBI" id="CHEBI:29748"/>
    </ligand>
</feature>
<feature type="binding site" evidence="2">
    <location>
        <position position="414"/>
    </location>
    <ligand>
        <name>chorismate</name>
        <dbReference type="ChEBI" id="CHEBI:29748"/>
    </ligand>
</feature>
<feature type="binding site" evidence="2">
    <location>
        <begin position="428"/>
        <end position="430"/>
    </location>
    <ligand>
        <name>chorismate</name>
        <dbReference type="ChEBI" id="CHEBI:29748"/>
    </ligand>
</feature>
<feature type="binding site" evidence="2">
    <location>
        <position position="430"/>
    </location>
    <ligand>
        <name>chorismate</name>
        <dbReference type="ChEBI" id="CHEBI:29748"/>
    </ligand>
</feature>
<feature type="binding site" evidence="2">
    <location>
        <position position="443"/>
    </location>
    <ligand>
        <name>Mg(2+)</name>
        <dbReference type="ChEBI" id="CHEBI:18420"/>
    </ligand>
</feature>
<proteinExistence type="inferred from homology"/>
<gene>
    <name type="primary">trpE</name>
    <name type="ordered locus">TTHA1844</name>
</gene>
<reference key="1">
    <citation type="journal article" date="1988" name="Biochim. Biophys. Acta">
        <title>Molecular cloning and nucleotide sequence of Thermus thermophilus HB8 trpE and trpG.</title>
        <authorList>
            <person name="Sato S."/>
            <person name="Nakada Y."/>
            <person name="Kanaya S."/>
            <person name="Tanaka T."/>
        </authorList>
    </citation>
    <scope>NUCLEOTIDE SEQUENCE [GENOMIC DNA]</scope>
</reference>
<reference key="2">
    <citation type="submission" date="2004-11" db="EMBL/GenBank/DDBJ databases">
        <title>Complete genome sequence of Thermus thermophilus HB8.</title>
        <authorList>
            <person name="Masui R."/>
            <person name="Kurokawa K."/>
            <person name="Nakagawa N."/>
            <person name="Tokunaga F."/>
            <person name="Koyama Y."/>
            <person name="Shibata T."/>
            <person name="Oshima T."/>
            <person name="Yokoyama S."/>
            <person name="Yasunaga T."/>
            <person name="Kuramitsu S."/>
        </authorList>
    </citation>
    <scope>NUCLEOTIDE SEQUENCE [LARGE SCALE GENOMIC DNA]</scope>
    <source>
        <strain>ATCC 27634 / DSM 579 / HB8</strain>
    </source>
</reference>